<keyword id="KW-0002">3D-structure</keyword>
<keyword id="KW-0067">ATP-binding</keyword>
<keyword id="KW-0963">Cytoplasm</keyword>
<keyword id="KW-0903">Direct protein sequencing</keyword>
<keyword id="KW-0418">Kinase</keyword>
<keyword id="KW-0547">Nucleotide-binding</keyword>
<keyword id="KW-0808">Transferase</keyword>
<protein>
    <recommendedName>
        <fullName>Adenylate kinase</fullName>
        <shortName>AK</shortName>
        <ecNumber>2.7.4.3</ecNumber>
    </recommendedName>
    <alternativeName>
        <fullName>ATP-AMP transphosphorylase</fullName>
    </alternativeName>
</protein>
<sequence>MKNKVVVVTGVPGVGSTTSSQLAMDNLRKEGVNYKMVSFGSVMFEVAKEENLVSDRDQMRKMDPETQKRIQKMAGRKIAEMAKESPVAVDTHSTVSTPKGYLPGLPSWVLNELNPDLIIVVETTGDEILMRRMSDETRVRDLDTASTIEQHQFMNRCAAMSYGVLTGATVKIVQNRNGLLDQAVEELTNVLR</sequence>
<dbReference type="EC" id="2.7.4.3"/>
<dbReference type="EMBL" id="U39879">
    <property type="protein sequence ID" value="AAC44865.1"/>
    <property type="molecule type" value="Genomic_DNA"/>
</dbReference>
<dbReference type="PDB" id="1KHT">
    <property type="method" value="X-ray"/>
    <property type="resolution" value="2.50 A"/>
    <property type="chains" value="A/B/C=1-192"/>
</dbReference>
<dbReference type="PDBsum" id="1KHT"/>
<dbReference type="SMR" id="P43411"/>
<dbReference type="OrthoDB" id="26198at2157"/>
<dbReference type="BRENDA" id="2.7.4.3">
    <property type="organism ID" value="3268"/>
</dbReference>
<dbReference type="EvolutionaryTrace" id="P43411"/>
<dbReference type="GO" id="GO:0005737">
    <property type="term" value="C:cytoplasm"/>
    <property type="evidence" value="ECO:0007669"/>
    <property type="project" value="UniProtKB-SubCell"/>
</dbReference>
<dbReference type="GO" id="GO:0004017">
    <property type="term" value="F:adenylate kinase activity"/>
    <property type="evidence" value="ECO:0007669"/>
    <property type="project" value="UniProtKB-UniRule"/>
</dbReference>
<dbReference type="GO" id="GO:0005524">
    <property type="term" value="F:ATP binding"/>
    <property type="evidence" value="ECO:0007669"/>
    <property type="project" value="UniProtKB-UniRule"/>
</dbReference>
<dbReference type="Gene3D" id="3.40.50.300">
    <property type="entry name" value="P-loop containing nucleotide triphosphate hydrolases"/>
    <property type="match status" value="1"/>
</dbReference>
<dbReference type="HAMAP" id="MF_00234">
    <property type="entry name" value="Adenylate_kinase_AdkA"/>
    <property type="match status" value="1"/>
</dbReference>
<dbReference type="InterPro" id="IPR023477">
    <property type="entry name" value="Adenylate_kinase_AdkA"/>
</dbReference>
<dbReference type="InterPro" id="IPR027417">
    <property type="entry name" value="P-loop_NTPase"/>
</dbReference>
<dbReference type="NCBIfam" id="NF003122">
    <property type="entry name" value="PRK04040.1"/>
    <property type="match status" value="1"/>
</dbReference>
<dbReference type="Pfam" id="PF13207">
    <property type="entry name" value="AAA_17"/>
    <property type="match status" value="1"/>
</dbReference>
<dbReference type="SUPFAM" id="SSF52540">
    <property type="entry name" value="P-loop containing nucleoside triphosphate hydrolases"/>
    <property type="match status" value="1"/>
</dbReference>
<proteinExistence type="evidence at protein level"/>
<reference key="1">
    <citation type="journal article" date="1997" name="Gene">
        <title>The adenylate kinase genes of M. voltae, M. thermolithotrophicus, M. jannaschii, and M. igneus define a new family of adenylate kinases.</title>
        <authorList>
            <person name="Ferber D.M."/>
            <person name="Haney P.J."/>
            <person name="Berk H."/>
            <person name="Lynn D."/>
            <person name="Konisky J."/>
        </authorList>
    </citation>
    <scope>NUCLEOTIDE SEQUENCE [GENOMIC DNA]</scope>
    <source>
        <strain>ATCC 33273 / DSM 1537 / NBRC 100457 / OCM 70 / PS</strain>
    </source>
</reference>
<reference key="2">
    <citation type="journal article" date="1995" name="J. Bacteriol.">
        <title>The adenylate kinases from a mesophilic and three thermophilic methanogenic members of the Archaea.</title>
        <authorList>
            <person name="Rusnak P."/>
            <person name="Haney P."/>
            <person name="Konisky J."/>
        </authorList>
    </citation>
    <scope>PROTEIN SEQUENCE OF 1-38</scope>
</reference>
<name>KADA_METVO</name>
<evidence type="ECO:0000250" key="1"/>
<evidence type="ECO:0000305" key="2"/>
<evidence type="ECO:0007829" key="3">
    <source>
        <dbReference type="PDB" id="1KHT"/>
    </source>
</evidence>
<feature type="chain" id="PRO_0000131819" description="Adenylate kinase">
    <location>
        <begin position="1"/>
        <end position="192"/>
    </location>
</feature>
<feature type="binding site" evidence="1">
    <location>
        <begin position="10"/>
        <end position="18"/>
    </location>
    <ligand>
        <name>ATP</name>
        <dbReference type="ChEBI" id="CHEBI:30616"/>
    </ligand>
</feature>
<feature type="sequence conflict" description="In Ref. 2; AA sequence." evidence="2" ref="2">
    <original>G</original>
    <variation>GG</variation>
    <location>
        <position position="31"/>
    </location>
</feature>
<feature type="strand" evidence="3">
    <location>
        <begin position="5"/>
        <end position="9"/>
    </location>
</feature>
<feature type="helix" evidence="3">
    <location>
        <begin position="16"/>
        <end position="28"/>
    </location>
</feature>
<feature type="turn" evidence="3">
    <location>
        <begin position="29"/>
        <end position="31"/>
    </location>
</feature>
<feature type="strand" evidence="3">
    <location>
        <begin position="35"/>
        <end position="38"/>
    </location>
</feature>
<feature type="helix" evidence="3">
    <location>
        <begin position="39"/>
        <end position="49"/>
    </location>
</feature>
<feature type="helix" evidence="3">
    <location>
        <begin position="56"/>
        <end position="59"/>
    </location>
</feature>
<feature type="helix" evidence="3">
    <location>
        <begin position="64"/>
        <end position="82"/>
    </location>
</feature>
<feature type="strand" evidence="3">
    <location>
        <begin position="87"/>
        <end position="90"/>
    </location>
</feature>
<feature type="strand" evidence="3">
    <location>
        <begin position="93"/>
        <end position="97"/>
    </location>
</feature>
<feature type="strand" evidence="3">
    <location>
        <begin position="100"/>
        <end position="105"/>
    </location>
</feature>
<feature type="helix" evidence="3">
    <location>
        <begin position="107"/>
        <end position="113"/>
    </location>
</feature>
<feature type="strand" evidence="3">
    <location>
        <begin position="116"/>
        <end position="122"/>
    </location>
</feature>
<feature type="helix" evidence="3">
    <location>
        <begin position="125"/>
        <end position="133"/>
    </location>
</feature>
<feature type="strand" evidence="3">
    <location>
        <begin position="135"/>
        <end position="137"/>
    </location>
</feature>
<feature type="strand" evidence="3">
    <location>
        <begin position="139"/>
        <end position="141"/>
    </location>
</feature>
<feature type="helix" evidence="3">
    <location>
        <begin position="145"/>
        <end position="166"/>
    </location>
</feature>
<feature type="strand" evidence="3">
    <location>
        <begin position="169"/>
        <end position="174"/>
    </location>
</feature>
<feature type="helix" evidence="3">
    <location>
        <begin position="180"/>
        <end position="191"/>
    </location>
</feature>
<gene>
    <name type="primary">adkA</name>
    <name type="synonym">adk</name>
</gene>
<organism>
    <name type="scientific">Methanococcus voltae</name>
    <dbReference type="NCBI Taxonomy" id="2188"/>
    <lineage>
        <taxon>Archaea</taxon>
        <taxon>Methanobacteriati</taxon>
        <taxon>Methanobacteriota</taxon>
        <taxon>Methanomada group</taxon>
        <taxon>Methanococci</taxon>
        <taxon>Methanococcales</taxon>
        <taxon>Methanococcaceae</taxon>
        <taxon>Methanococcus</taxon>
    </lineage>
</organism>
<accession>P43411</accession>
<comment type="catalytic activity">
    <reaction>
        <text>AMP + ATP = 2 ADP</text>
        <dbReference type="Rhea" id="RHEA:12973"/>
        <dbReference type="ChEBI" id="CHEBI:30616"/>
        <dbReference type="ChEBI" id="CHEBI:456215"/>
        <dbReference type="ChEBI" id="CHEBI:456216"/>
        <dbReference type="EC" id="2.7.4.3"/>
    </reaction>
</comment>
<comment type="biophysicochemical properties">
    <temperatureDependence>
        <text>Active from 30 to 40 degrees Celsius.</text>
    </temperatureDependence>
</comment>
<comment type="subunit">
    <text evidence="2">Monomer.</text>
</comment>
<comment type="subcellular location">
    <subcellularLocation>
        <location>Cytoplasm</location>
    </subcellularLocation>
</comment>
<comment type="similarity">
    <text evidence="2">Belongs to the archaeal adenylate kinase family.</text>
</comment>